<feature type="chain" id="PRO_0000198026" description="40 kDa major outer membrane protein">
    <location>
        <begin position="1"/>
        <end position="21" status="greater than"/>
    </location>
</feature>
<feature type="non-terminal residue">
    <location>
        <position position="21"/>
    </location>
</feature>
<name>OMP1_ACTPL</name>
<protein>
    <recommendedName>
        <fullName>40 kDa major outer membrane protein</fullName>
        <shortName>MOMP</shortName>
    </recommendedName>
</protein>
<organism>
    <name type="scientific">Actinobacillus pleuropneumoniae</name>
    <name type="common">Haemophilus pleuropneumoniae</name>
    <dbReference type="NCBI Taxonomy" id="715"/>
    <lineage>
        <taxon>Bacteria</taxon>
        <taxon>Pseudomonadati</taxon>
        <taxon>Pseudomonadota</taxon>
        <taxon>Gammaproteobacteria</taxon>
        <taxon>Pasteurellales</taxon>
        <taxon>Pasteurellaceae</taxon>
        <taxon>Actinobacillus</taxon>
    </lineage>
</organism>
<accession>P80368</accession>
<reference key="1">
    <citation type="journal article" date="1995" name="J. Vet. Med. B">
        <title>Isolation of the major outer-membrane protein of Actinobacillus pleuropneumoniae and Haemophilus parasuis.</title>
        <authorList>
            <person name="Hartmann L."/>
            <person name="Schroeder W."/>
            <person name="Luebke-Becker A."/>
        </authorList>
    </citation>
    <scope>PROTEIN SEQUENCE</scope>
    <source>
        <strain>598</strain>
    </source>
</reference>
<proteinExistence type="evidence at protein level"/>
<sequence>VTVYDAEGTKVQIDGSLRVEL</sequence>
<dbReference type="GO" id="GO:0009279">
    <property type="term" value="C:cell outer membrane"/>
    <property type="evidence" value="ECO:0007669"/>
    <property type="project" value="UniProtKB-SubCell"/>
</dbReference>
<dbReference type="GO" id="GO:0046930">
    <property type="term" value="C:pore complex"/>
    <property type="evidence" value="ECO:0007669"/>
    <property type="project" value="UniProtKB-KW"/>
</dbReference>
<dbReference type="GO" id="GO:0015288">
    <property type="term" value="F:porin activity"/>
    <property type="evidence" value="ECO:0007669"/>
    <property type="project" value="UniProtKB-KW"/>
</dbReference>
<dbReference type="GO" id="GO:0006811">
    <property type="term" value="P:monoatomic ion transport"/>
    <property type="evidence" value="ECO:0007669"/>
    <property type="project" value="UniProtKB-KW"/>
</dbReference>
<keyword id="KW-0998">Cell outer membrane</keyword>
<keyword id="KW-0903">Direct protein sequencing</keyword>
<keyword id="KW-1015">Disulfide bond</keyword>
<keyword id="KW-0406">Ion transport</keyword>
<keyword id="KW-0472">Membrane</keyword>
<keyword id="KW-0626">Porin</keyword>
<keyword id="KW-0812">Transmembrane</keyword>
<keyword id="KW-1134">Transmembrane beta strand</keyword>
<keyword id="KW-0813">Transport</keyword>
<comment type="function">
    <text>Structural rigidity of the outer membrane of elementary bodies and porin forming, permitting diffusion of solutes through the intracellular reticulate body membrane.</text>
</comment>
<comment type="subunit">
    <text>Disulfide bond interactions within and between MOMP molecules and other components form high molecular-weight oligomers.</text>
</comment>
<comment type="subcellular location">
    <subcellularLocation>
        <location>Cell outer membrane</location>
        <topology>Multi-pass membrane protein</topology>
    </subcellularLocation>
</comment>